<name>HMUV_ECOL6</name>
<protein>
    <recommendedName>
        <fullName evidence="1">Hemin import ATP-binding protein HmuV</fullName>
        <ecNumber evidence="1">7.6.2.-</ecNumber>
    </recommendedName>
</protein>
<comment type="function">
    <text evidence="1">Part of the ABC transporter complex HmuTUV involved in hemin import. Responsible for energy coupling to the transport system.</text>
</comment>
<comment type="subunit">
    <text evidence="1">The complex is composed of two ATP-binding proteins (HmuV), two transmembrane proteins (HmuU) and a solute-binding protein (HmuT).</text>
</comment>
<comment type="subcellular location">
    <subcellularLocation>
        <location evidence="1">Cell inner membrane</location>
        <topology evidence="1">Peripheral membrane protein</topology>
    </subcellularLocation>
</comment>
<comment type="similarity">
    <text evidence="1">Belongs to the ABC transporter superfamily. Heme (hemin) importer (TC 3.A.1.14.5) family.</text>
</comment>
<comment type="sequence caution" evidence="2">
    <conflict type="erroneous initiation">
        <sequence resource="EMBL-CDS" id="AAN82754"/>
    </conflict>
</comment>
<proteinExistence type="inferred from homology"/>
<evidence type="ECO:0000255" key="1">
    <source>
        <dbReference type="HAMAP-Rule" id="MF_01718"/>
    </source>
</evidence>
<evidence type="ECO:0000305" key="2"/>
<dbReference type="EC" id="7.6.2.-" evidence="1"/>
<dbReference type="EMBL" id="AE014075">
    <property type="protein sequence ID" value="AAN82754.1"/>
    <property type="status" value="ALT_INIT"/>
    <property type="molecule type" value="Genomic_DNA"/>
</dbReference>
<dbReference type="RefSeq" id="WP_000622316.1">
    <property type="nucleotide sequence ID" value="NZ_CP051263.1"/>
</dbReference>
<dbReference type="SMR" id="Q8FCJ1"/>
<dbReference type="STRING" id="199310.c4318"/>
<dbReference type="KEGG" id="ecc:c4318"/>
<dbReference type="eggNOG" id="COG4559">
    <property type="taxonomic scope" value="Bacteria"/>
</dbReference>
<dbReference type="HOGENOM" id="CLU_000604_1_11_6"/>
<dbReference type="Proteomes" id="UP000001410">
    <property type="component" value="Chromosome"/>
</dbReference>
<dbReference type="GO" id="GO:0005886">
    <property type="term" value="C:plasma membrane"/>
    <property type="evidence" value="ECO:0007669"/>
    <property type="project" value="UniProtKB-SubCell"/>
</dbReference>
<dbReference type="GO" id="GO:0005524">
    <property type="term" value="F:ATP binding"/>
    <property type="evidence" value="ECO:0007669"/>
    <property type="project" value="UniProtKB-KW"/>
</dbReference>
<dbReference type="GO" id="GO:0016887">
    <property type="term" value="F:ATP hydrolysis activity"/>
    <property type="evidence" value="ECO:0007669"/>
    <property type="project" value="InterPro"/>
</dbReference>
<dbReference type="CDD" id="cd03214">
    <property type="entry name" value="ABC_Iron-Siderophores_B12_Hemin"/>
    <property type="match status" value="1"/>
</dbReference>
<dbReference type="FunFam" id="3.40.50.300:FF:000134">
    <property type="entry name" value="Iron-enterobactin ABC transporter ATP-binding protein"/>
    <property type="match status" value="1"/>
</dbReference>
<dbReference type="Gene3D" id="3.40.50.300">
    <property type="entry name" value="P-loop containing nucleotide triphosphate hydrolases"/>
    <property type="match status" value="1"/>
</dbReference>
<dbReference type="InterPro" id="IPR003593">
    <property type="entry name" value="AAA+_ATPase"/>
</dbReference>
<dbReference type="InterPro" id="IPR003439">
    <property type="entry name" value="ABC_transporter-like_ATP-bd"/>
</dbReference>
<dbReference type="InterPro" id="IPR017871">
    <property type="entry name" value="ABC_transporter-like_CS"/>
</dbReference>
<dbReference type="InterPro" id="IPR027417">
    <property type="entry name" value="P-loop_NTPase"/>
</dbReference>
<dbReference type="NCBIfam" id="NF010068">
    <property type="entry name" value="PRK13548.1"/>
    <property type="match status" value="1"/>
</dbReference>
<dbReference type="PANTHER" id="PTHR42794">
    <property type="entry name" value="HEMIN IMPORT ATP-BINDING PROTEIN HMUV"/>
    <property type="match status" value="1"/>
</dbReference>
<dbReference type="PANTHER" id="PTHR42794:SF1">
    <property type="entry name" value="HEMIN IMPORT ATP-BINDING PROTEIN HMUV"/>
    <property type="match status" value="1"/>
</dbReference>
<dbReference type="Pfam" id="PF00005">
    <property type="entry name" value="ABC_tran"/>
    <property type="match status" value="1"/>
</dbReference>
<dbReference type="SMART" id="SM00382">
    <property type="entry name" value="AAA"/>
    <property type="match status" value="1"/>
</dbReference>
<dbReference type="SUPFAM" id="SSF52540">
    <property type="entry name" value="P-loop containing nucleoside triphosphate hydrolases"/>
    <property type="match status" value="1"/>
</dbReference>
<dbReference type="PROSITE" id="PS00211">
    <property type="entry name" value="ABC_TRANSPORTER_1"/>
    <property type="match status" value="1"/>
</dbReference>
<dbReference type="PROSITE" id="PS50893">
    <property type="entry name" value="ABC_TRANSPORTER_2"/>
    <property type="match status" value="1"/>
</dbReference>
<dbReference type="PROSITE" id="PS51261">
    <property type="entry name" value="HMUV"/>
    <property type="match status" value="1"/>
</dbReference>
<accession>Q8FCJ1</accession>
<keyword id="KW-0067">ATP-binding</keyword>
<keyword id="KW-0997">Cell inner membrane</keyword>
<keyword id="KW-1003">Cell membrane</keyword>
<keyword id="KW-0472">Membrane</keyword>
<keyword id="KW-0547">Nucleotide-binding</keyword>
<keyword id="KW-1185">Reference proteome</keyword>
<keyword id="KW-1278">Translocase</keyword>
<keyword id="KW-0813">Transport</keyword>
<sequence length="256" mass="28881">MISAQNLVYSLQGRRLTDNVSLTFPGGEIVAILGPNGAGKSTLLRQLTGYLQPDSGECRLFNKPLNEWSITELAKHRAVMRQNSHMAFPFSVQEVIQMGRHPHRTGNQDNETAQIMALCDCQALANRDYRQLSGGEQQRVQLARLLVQLWEPTPSPKWLFLDEPTSALDIHHQQHLFRLLRQLVHERQFNVCCVLHDLNLAARYADRVVLMQKGKVIANGKPQDVLTQQALTMLYGADITVLKDPANHSPLIVLDH</sequence>
<feature type="chain" id="PRO_0000269591" description="Hemin import ATP-binding protein HmuV">
    <location>
        <begin position="1"/>
        <end position="256"/>
    </location>
</feature>
<feature type="domain" description="ABC transporter" evidence="1">
    <location>
        <begin position="2"/>
        <end position="238"/>
    </location>
</feature>
<feature type="binding site" evidence="1">
    <location>
        <begin position="34"/>
        <end position="41"/>
    </location>
    <ligand>
        <name>ATP</name>
        <dbReference type="ChEBI" id="CHEBI:30616"/>
    </ligand>
</feature>
<reference key="1">
    <citation type="journal article" date="2002" name="Proc. Natl. Acad. Sci. U.S.A.">
        <title>Extensive mosaic structure revealed by the complete genome sequence of uropathogenic Escherichia coli.</title>
        <authorList>
            <person name="Welch R.A."/>
            <person name="Burland V."/>
            <person name="Plunkett G. III"/>
            <person name="Redford P."/>
            <person name="Roesch P."/>
            <person name="Rasko D."/>
            <person name="Buckles E.L."/>
            <person name="Liou S.-R."/>
            <person name="Boutin A."/>
            <person name="Hackett J."/>
            <person name="Stroud D."/>
            <person name="Mayhew G.F."/>
            <person name="Rose D.J."/>
            <person name="Zhou S."/>
            <person name="Schwartz D.C."/>
            <person name="Perna N.T."/>
            <person name="Mobley H.L.T."/>
            <person name="Donnenberg M.S."/>
            <person name="Blattner F.R."/>
        </authorList>
    </citation>
    <scope>NUCLEOTIDE SEQUENCE [LARGE SCALE GENOMIC DNA]</scope>
    <source>
        <strain>CFT073 / ATCC 700928 / UPEC</strain>
    </source>
</reference>
<gene>
    <name evidence="1" type="primary">hmuV</name>
    <name type="ordered locus">c4318</name>
</gene>
<organism>
    <name type="scientific">Escherichia coli O6:H1 (strain CFT073 / ATCC 700928 / UPEC)</name>
    <dbReference type="NCBI Taxonomy" id="199310"/>
    <lineage>
        <taxon>Bacteria</taxon>
        <taxon>Pseudomonadati</taxon>
        <taxon>Pseudomonadota</taxon>
        <taxon>Gammaproteobacteria</taxon>
        <taxon>Enterobacterales</taxon>
        <taxon>Enterobacteriaceae</taxon>
        <taxon>Escherichia</taxon>
    </lineage>
</organism>